<protein>
    <recommendedName>
        <fullName evidence="1">Probable transcriptional regulatory protein ECH_0704</fullName>
    </recommendedName>
</protein>
<dbReference type="EMBL" id="CP000236">
    <property type="protein sequence ID" value="ABD45581.1"/>
    <property type="molecule type" value="Genomic_DNA"/>
</dbReference>
<dbReference type="RefSeq" id="WP_006009839.1">
    <property type="nucleotide sequence ID" value="NC_007799.1"/>
</dbReference>
<dbReference type="SMR" id="Q2GGC4"/>
<dbReference type="STRING" id="205920.ECH_0704"/>
<dbReference type="KEGG" id="ech:ECH_0704"/>
<dbReference type="eggNOG" id="COG0217">
    <property type="taxonomic scope" value="Bacteria"/>
</dbReference>
<dbReference type="HOGENOM" id="CLU_062974_2_2_5"/>
<dbReference type="OrthoDB" id="9781053at2"/>
<dbReference type="Proteomes" id="UP000008320">
    <property type="component" value="Chromosome"/>
</dbReference>
<dbReference type="GO" id="GO:0005737">
    <property type="term" value="C:cytoplasm"/>
    <property type="evidence" value="ECO:0007669"/>
    <property type="project" value="UniProtKB-SubCell"/>
</dbReference>
<dbReference type="GO" id="GO:0003677">
    <property type="term" value="F:DNA binding"/>
    <property type="evidence" value="ECO:0007669"/>
    <property type="project" value="UniProtKB-UniRule"/>
</dbReference>
<dbReference type="GO" id="GO:0006355">
    <property type="term" value="P:regulation of DNA-templated transcription"/>
    <property type="evidence" value="ECO:0007669"/>
    <property type="project" value="UniProtKB-UniRule"/>
</dbReference>
<dbReference type="FunFam" id="1.10.10.200:FF:000002">
    <property type="entry name" value="Probable transcriptional regulatory protein CLM62_37755"/>
    <property type="match status" value="1"/>
</dbReference>
<dbReference type="Gene3D" id="1.10.10.200">
    <property type="match status" value="1"/>
</dbReference>
<dbReference type="Gene3D" id="3.30.70.980">
    <property type="match status" value="2"/>
</dbReference>
<dbReference type="HAMAP" id="MF_00693">
    <property type="entry name" value="Transcrip_reg_TACO1"/>
    <property type="match status" value="1"/>
</dbReference>
<dbReference type="InterPro" id="IPR017856">
    <property type="entry name" value="Integrase-like_N"/>
</dbReference>
<dbReference type="InterPro" id="IPR048300">
    <property type="entry name" value="TACO1_YebC-like_2nd/3rd_dom"/>
</dbReference>
<dbReference type="InterPro" id="IPR049083">
    <property type="entry name" value="TACO1_YebC_N"/>
</dbReference>
<dbReference type="InterPro" id="IPR002876">
    <property type="entry name" value="Transcrip_reg_TACO1-like"/>
</dbReference>
<dbReference type="InterPro" id="IPR026564">
    <property type="entry name" value="Transcrip_reg_TACO1-like_dom3"/>
</dbReference>
<dbReference type="InterPro" id="IPR029072">
    <property type="entry name" value="YebC-like"/>
</dbReference>
<dbReference type="NCBIfam" id="NF001030">
    <property type="entry name" value="PRK00110.1"/>
    <property type="match status" value="1"/>
</dbReference>
<dbReference type="NCBIfam" id="NF009044">
    <property type="entry name" value="PRK12378.1"/>
    <property type="match status" value="1"/>
</dbReference>
<dbReference type="NCBIfam" id="TIGR01033">
    <property type="entry name" value="YebC/PmpR family DNA-binding transcriptional regulator"/>
    <property type="match status" value="1"/>
</dbReference>
<dbReference type="PANTHER" id="PTHR12532:SF11">
    <property type="match status" value="1"/>
</dbReference>
<dbReference type="PANTHER" id="PTHR12532">
    <property type="entry name" value="TRANSLATIONAL ACTIVATOR OF CYTOCHROME C OXIDASE 1"/>
    <property type="match status" value="1"/>
</dbReference>
<dbReference type="Pfam" id="PF20772">
    <property type="entry name" value="TACO1_YebC_N"/>
    <property type="match status" value="1"/>
</dbReference>
<dbReference type="Pfam" id="PF01709">
    <property type="entry name" value="Transcrip_reg"/>
    <property type="match status" value="1"/>
</dbReference>
<dbReference type="SUPFAM" id="SSF75625">
    <property type="entry name" value="YebC-like"/>
    <property type="match status" value="1"/>
</dbReference>
<comment type="subcellular location">
    <subcellularLocation>
        <location evidence="1">Cytoplasm</location>
    </subcellularLocation>
</comment>
<comment type="similarity">
    <text evidence="1">Belongs to the TACO1 family.</text>
</comment>
<feature type="chain" id="PRO_0000257061" description="Probable transcriptional regulatory protein ECH_0704">
    <location>
        <begin position="1"/>
        <end position="248"/>
    </location>
</feature>
<feature type="region of interest" description="Disordered" evidence="2">
    <location>
        <begin position="1"/>
        <end position="21"/>
    </location>
</feature>
<gene>
    <name type="ordered locus">ECH_0704</name>
</gene>
<sequence length="248" mass="28082">MAGHSQFANIKHRKGAQDAKRAQKFTKLIREIIVAAKQGLPDPEFNSRLRSAIIAAKKENLPKDRIDAAIKSATGNTQTDNYEEVVYEGYGPGNIALMIQTLTNNRNRTAAELRHALSKYNGKLGESGSVSFLFNHVGVIAYKASSIDSFDSLFNTAIELHALDVEEIIQDDTQEKIYYVICNVQDFGNVRDQLFHKFSDAEFSRLFWKASDTVKIEDEEIQKKISNLMDLLENNDDVQYIDSNFTFY</sequence>
<accession>Q2GGC4</accession>
<organism>
    <name type="scientific">Ehrlichia chaffeensis (strain ATCC CRL-10679 / Arkansas)</name>
    <dbReference type="NCBI Taxonomy" id="205920"/>
    <lineage>
        <taxon>Bacteria</taxon>
        <taxon>Pseudomonadati</taxon>
        <taxon>Pseudomonadota</taxon>
        <taxon>Alphaproteobacteria</taxon>
        <taxon>Rickettsiales</taxon>
        <taxon>Anaplasmataceae</taxon>
        <taxon>Ehrlichia</taxon>
    </lineage>
</organism>
<keyword id="KW-0963">Cytoplasm</keyword>
<keyword id="KW-0238">DNA-binding</keyword>
<keyword id="KW-1185">Reference proteome</keyword>
<keyword id="KW-0804">Transcription</keyword>
<keyword id="KW-0805">Transcription regulation</keyword>
<evidence type="ECO:0000255" key="1">
    <source>
        <dbReference type="HAMAP-Rule" id="MF_00693"/>
    </source>
</evidence>
<evidence type="ECO:0000256" key="2">
    <source>
        <dbReference type="SAM" id="MobiDB-lite"/>
    </source>
</evidence>
<name>Y704_EHRCR</name>
<reference key="1">
    <citation type="journal article" date="2006" name="PLoS Genet.">
        <title>Comparative genomics of emerging human ehrlichiosis agents.</title>
        <authorList>
            <person name="Dunning Hotopp J.C."/>
            <person name="Lin M."/>
            <person name="Madupu R."/>
            <person name="Crabtree J."/>
            <person name="Angiuoli S.V."/>
            <person name="Eisen J.A."/>
            <person name="Seshadri R."/>
            <person name="Ren Q."/>
            <person name="Wu M."/>
            <person name="Utterback T.R."/>
            <person name="Smith S."/>
            <person name="Lewis M."/>
            <person name="Khouri H."/>
            <person name="Zhang C."/>
            <person name="Niu H."/>
            <person name="Lin Q."/>
            <person name="Ohashi N."/>
            <person name="Zhi N."/>
            <person name="Nelson W.C."/>
            <person name="Brinkac L.M."/>
            <person name="Dodson R.J."/>
            <person name="Rosovitz M.J."/>
            <person name="Sundaram J.P."/>
            <person name="Daugherty S.C."/>
            <person name="Davidsen T."/>
            <person name="Durkin A.S."/>
            <person name="Gwinn M.L."/>
            <person name="Haft D.H."/>
            <person name="Selengut J.D."/>
            <person name="Sullivan S.A."/>
            <person name="Zafar N."/>
            <person name="Zhou L."/>
            <person name="Benahmed F."/>
            <person name="Forberger H."/>
            <person name="Halpin R."/>
            <person name="Mulligan S."/>
            <person name="Robinson J."/>
            <person name="White O."/>
            <person name="Rikihisa Y."/>
            <person name="Tettelin H."/>
        </authorList>
    </citation>
    <scope>NUCLEOTIDE SEQUENCE [LARGE SCALE GENOMIC DNA]</scope>
    <source>
        <strain>ATCC CRL-10679 / Arkansas</strain>
    </source>
</reference>
<proteinExistence type="inferred from homology"/>